<keyword id="KW-0007">Acetylation</keyword>
<keyword id="KW-0167">Capsid protein</keyword>
<keyword id="KW-0687">Ribonucleoprotein</keyword>
<keyword id="KW-0694">RNA-binding</keyword>
<keyword id="KW-1142">T=3 icosahedral capsid protein</keyword>
<keyword id="KW-0543">Viral nucleoprotein</keyword>
<keyword id="KW-0946">Virion</keyword>
<feature type="chain" id="PRO_0000083206" description="Capsid protein">
    <location>
        <begin position="1"/>
        <end position="218"/>
    </location>
</feature>
<feature type="region of interest" description="Disordered" evidence="2">
    <location>
        <begin position="1"/>
        <end position="28"/>
    </location>
</feature>
<feature type="compositionally biased region" description="Basic residues" evidence="2">
    <location>
        <begin position="11"/>
        <end position="21"/>
    </location>
</feature>
<feature type="modified residue" description="N-acetylmethionine; by host" evidence="1">
    <location>
        <position position="1"/>
    </location>
</feature>
<accession>P69467</accession>
<accession>P14767</accession>
<organismHost>
    <name type="scientific">Cucumis melo</name>
    <name type="common">Muskmelon</name>
    <dbReference type="NCBI Taxonomy" id="3656"/>
</organismHost>
<evidence type="ECO:0000250" key="1"/>
<evidence type="ECO:0000256" key="2">
    <source>
        <dbReference type="SAM" id="MobiDB-lite"/>
    </source>
</evidence>
<evidence type="ECO:0000305" key="3"/>
<dbReference type="EMBL" id="X16386">
    <property type="protein sequence ID" value="CAA34422.1"/>
    <property type="molecule type" value="Genomic_RNA"/>
</dbReference>
<dbReference type="PIR" id="S09663">
    <property type="entry name" value="S09663"/>
</dbReference>
<dbReference type="SMR" id="P69467"/>
<dbReference type="KEGG" id="vg:962640"/>
<dbReference type="GO" id="GO:1990904">
    <property type="term" value="C:ribonucleoprotein complex"/>
    <property type="evidence" value="ECO:0007669"/>
    <property type="project" value="UniProtKB-KW"/>
</dbReference>
<dbReference type="GO" id="GO:0039617">
    <property type="term" value="C:T=3 icosahedral viral capsid"/>
    <property type="evidence" value="ECO:0007669"/>
    <property type="project" value="UniProtKB-KW"/>
</dbReference>
<dbReference type="GO" id="GO:0019013">
    <property type="term" value="C:viral nucleocapsid"/>
    <property type="evidence" value="ECO:0007669"/>
    <property type="project" value="UniProtKB-KW"/>
</dbReference>
<dbReference type="GO" id="GO:0003723">
    <property type="term" value="F:RNA binding"/>
    <property type="evidence" value="ECO:0007669"/>
    <property type="project" value="UniProtKB-KW"/>
</dbReference>
<dbReference type="GO" id="GO:0005198">
    <property type="term" value="F:structural molecule activity"/>
    <property type="evidence" value="ECO:0007669"/>
    <property type="project" value="InterPro"/>
</dbReference>
<dbReference type="Gene3D" id="2.60.120.530">
    <property type="entry name" value="Cucumovirus coat protein, subunit A"/>
    <property type="match status" value="1"/>
</dbReference>
<dbReference type="InterPro" id="IPR000247">
    <property type="entry name" value="Cucumovirus_coat"/>
</dbReference>
<dbReference type="InterPro" id="IPR037137">
    <property type="entry name" value="Cucumovirus_coat_Asu_sf"/>
</dbReference>
<dbReference type="Pfam" id="PF00760">
    <property type="entry name" value="Cucumo_coat"/>
    <property type="match status" value="1"/>
</dbReference>
<dbReference type="PRINTS" id="PR00222">
    <property type="entry name" value="CUCUMOCOAT"/>
</dbReference>
<dbReference type="SUPFAM" id="SSF88633">
    <property type="entry name" value="Positive stranded ssRNA viruses"/>
    <property type="match status" value="1"/>
</dbReference>
<sequence>MDKSESTSAGRNRRRRPRRGSRSAPSSADANFRVLSQQLSRLNKTLAAGRPTINHPTFVGSERCRPGYTFTSITLKPPKIDRGSYYGKRLLLPDSVTEYDKKLVSRIQIRVNPLPKFDSTVWVTVRKVPASSDLSVAAISAMFADGASPVLVYQYAASGVQANNKLLYDLSAMRADIGDMRKYAVLVYSKDDALETDELVLHVDIEHQRIPTSGVLPV</sequence>
<gene>
    <name type="ORF">ORF3b</name>
</gene>
<comment type="function">
    <text evidence="1">Capsid protein. Probably binds RNA and plays a role in packaging (By similarity).</text>
</comment>
<comment type="subcellular location">
    <subcellularLocation>
        <location evidence="3">Virion</location>
    </subcellularLocation>
</comment>
<comment type="domain">
    <text evidence="1">The N-terminal arginine-rich stretch does not seem to be the major RNA-binding region that allows formation of an infectious ribonucleoprotein complex.</text>
</comment>
<comment type="similarity">
    <text evidence="3">Belongs to the cucumovirus capsid protein family.</text>
</comment>
<reference key="1">
    <citation type="journal article" date="1989" name="Nucleic Acids Res.">
        <title>Nucleotide sequence of the coat protein gene and flanking regions of cucumber mosaic virus (CMV) strain I17F.</title>
        <authorList>
            <person name="Noel M.J.T."/>
            <person name="Ben-Tahar S."/>
        </authorList>
    </citation>
    <scope>NUCLEOTIDE SEQUENCE [GENOMIC RNA]</scope>
</reference>
<reference key="2">
    <citation type="journal article" date="1990" name="Nucleic Acids Res.">
        <authorList>
            <person name="Noel M.J.T."/>
            <person name="Ben-Tahar S."/>
        </authorList>
    </citation>
    <scope>ERRATUM OF PUBMED:2602158</scope>
</reference>
<name>CAPSD_CMVI1</name>
<proteinExistence type="inferred from homology"/>
<protein>
    <recommendedName>
        <fullName>Capsid protein</fullName>
        <shortName>CP</shortName>
    </recommendedName>
    <alternativeName>
        <fullName>Coat protein</fullName>
    </alternativeName>
</protein>
<organism>
    <name type="scientific">Cucumber mosaic virus (strain I17F)</name>
    <name type="common">CMV</name>
    <dbReference type="NCBI Taxonomy" id="12308"/>
    <lineage>
        <taxon>Viruses</taxon>
        <taxon>Riboviria</taxon>
        <taxon>Orthornavirae</taxon>
        <taxon>Kitrinoviricota</taxon>
        <taxon>Alsuviricetes</taxon>
        <taxon>Martellivirales</taxon>
        <taxon>Bromoviridae</taxon>
        <taxon>Cucumovirus</taxon>
        <taxon>Cucumber mosaic virus</taxon>
    </lineage>
</organism>